<reference key="1">
    <citation type="journal article" date="2001" name="Science">
        <title>Comparative genomics of Listeria species.</title>
        <authorList>
            <person name="Glaser P."/>
            <person name="Frangeul L."/>
            <person name="Buchrieser C."/>
            <person name="Rusniok C."/>
            <person name="Amend A."/>
            <person name="Baquero F."/>
            <person name="Berche P."/>
            <person name="Bloecker H."/>
            <person name="Brandt P."/>
            <person name="Chakraborty T."/>
            <person name="Charbit A."/>
            <person name="Chetouani F."/>
            <person name="Couve E."/>
            <person name="de Daruvar A."/>
            <person name="Dehoux P."/>
            <person name="Domann E."/>
            <person name="Dominguez-Bernal G."/>
            <person name="Duchaud E."/>
            <person name="Durant L."/>
            <person name="Dussurget O."/>
            <person name="Entian K.-D."/>
            <person name="Fsihi H."/>
            <person name="Garcia-del Portillo F."/>
            <person name="Garrido P."/>
            <person name="Gautier L."/>
            <person name="Goebel W."/>
            <person name="Gomez-Lopez N."/>
            <person name="Hain T."/>
            <person name="Hauf J."/>
            <person name="Jackson D."/>
            <person name="Jones L.-M."/>
            <person name="Kaerst U."/>
            <person name="Kreft J."/>
            <person name="Kuhn M."/>
            <person name="Kunst F."/>
            <person name="Kurapkat G."/>
            <person name="Madueno E."/>
            <person name="Maitournam A."/>
            <person name="Mata Vicente J."/>
            <person name="Ng E."/>
            <person name="Nedjari H."/>
            <person name="Nordsiek G."/>
            <person name="Novella S."/>
            <person name="de Pablos B."/>
            <person name="Perez-Diaz J.-C."/>
            <person name="Purcell R."/>
            <person name="Remmel B."/>
            <person name="Rose M."/>
            <person name="Schlueter T."/>
            <person name="Simoes N."/>
            <person name="Tierrez A."/>
            <person name="Vazquez-Boland J.-A."/>
            <person name="Voss H."/>
            <person name="Wehland J."/>
            <person name="Cossart P."/>
        </authorList>
    </citation>
    <scope>NUCLEOTIDE SEQUENCE [LARGE SCALE GENOMIC DNA]</scope>
    <source>
        <strain>ATCC BAA-679 / EGD-e</strain>
    </source>
</reference>
<protein>
    <recommendedName>
        <fullName evidence="1">Heat-inducible transcription repressor HrcA</fullName>
    </recommendedName>
</protein>
<evidence type="ECO:0000255" key="1">
    <source>
        <dbReference type="HAMAP-Rule" id="MF_00081"/>
    </source>
</evidence>
<sequence>MLTERQLLIFRAIIDHFTWTIQPVGSKNLLKEKGLPYSSATIRNEMGVLEEYGFIEKTHSSSGRVPSEKGYRFYVDYLLQPKKLDKSDRQMIRSFFSENYYEMEGLIQNSALMLSDLTNYTSILLGPEATKNHLSGFRFVPINNFQAMLILITDQGHVDNHLVTIPEGTTLSDIERMVNILNERLVGLSLDDLKVQIPMEVKELLGKHVRNYESFMHVFSDSFAQASQQKVYFGGKTNILNQPEFHDINKVREMLHLMEEEQDVYELFRDIPDGLQVKIGRENNNSLMEDCSIITATYNIAGERVGGIVLLGPTRMEYSRMMGLVDVMSRDLTDVLTKLYRDNQN</sequence>
<dbReference type="EMBL" id="AL591979">
    <property type="protein sequence ID" value="CAC99553.1"/>
    <property type="molecule type" value="Genomic_DNA"/>
</dbReference>
<dbReference type="PIR" id="AC1259">
    <property type="entry name" value="AC1259"/>
</dbReference>
<dbReference type="RefSeq" id="NP_465000.1">
    <property type="nucleotide sequence ID" value="NC_003210.1"/>
</dbReference>
<dbReference type="RefSeq" id="WP_003726026.1">
    <property type="nucleotide sequence ID" value="NZ_CP149495.1"/>
</dbReference>
<dbReference type="SMR" id="P0DJM4"/>
<dbReference type="STRING" id="169963.gene:17594132"/>
<dbReference type="PaxDb" id="169963-lmo1475"/>
<dbReference type="EnsemblBacteria" id="CAC99553">
    <property type="protein sequence ID" value="CAC99553"/>
    <property type="gene ID" value="CAC99553"/>
</dbReference>
<dbReference type="GeneID" id="986933"/>
<dbReference type="KEGG" id="lmo:lmo1475"/>
<dbReference type="PATRIC" id="fig|169963.11.peg.1515"/>
<dbReference type="eggNOG" id="COG1420">
    <property type="taxonomic scope" value="Bacteria"/>
</dbReference>
<dbReference type="HOGENOM" id="CLU_050019_1_0_9"/>
<dbReference type="OrthoDB" id="9783139at2"/>
<dbReference type="PhylomeDB" id="P0DJM4"/>
<dbReference type="BioCyc" id="LMON169963:LMO1475-MONOMER"/>
<dbReference type="Proteomes" id="UP000000817">
    <property type="component" value="Chromosome"/>
</dbReference>
<dbReference type="GO" id="GO:0003677">
    <property type="term" value="F:DNA binding"/>
    <property type="evidence" value="ECO:0007669"/>
    <property type="project" value="InterPro"/>
</dbReference>
<dbReference type="GO" id="GO:0045892">
    <property type="term" value="P:negative regulation of DNA-templated transcription"/>
    <property type="evidence" value="ECO:0000318"/>
    <property type="project" value="GO_Central"/>
</dbReference>
<dbReference type="FunFam" id="1.10.10.10:FF:000049">
    <property type="entry name" value="Heat-inducible transcription repressor HrcA"/>
    <property type="match status" value="1"/>
</dbReference>
<dbReference type="Gene3D" id="3.30.450.40">
    <property type="match status" value="1"/>
</dbReference>
<dbReference type="Gene3D" id="3.30.390.60">
    <property type="entry name" value="Heat-inducible transcription repressor hrca homolog, domain 3"/>
    <property type="match status" value="1"/>
</dbReference>
<dbReference type="Gene3D" id="1.10.10.10">
    <property type="entry name" value="Winged helix-like DNA-binding domain superfamily/Winged helix DNA-binding domain"/>
    <property type="match status" value="1"/>
</dbReference>
<dbReference type="HAMAP" id="MF_00081">
    <property type="entry name" value="HrcA"/>
    <property type="match status" value="1"/>
</dbReference>
<dbReference type="InterPro" id="IPR029016">
    <property type="entry name" value="GAF-like_dom_sf"/>
</dbReference>
<dbReference type="InterPro" id="IPR002571">
    <property type="entry name" value="HrcA"/>
</dbReference>
<dbReference type="InterPro" id="IPR021153">
    <property type="entry name" value="HrcA_C"/>
</dbReference>
<dbReference type="InterPro" id="IPR036388">
    <property type="entry name" value="WH-like_DNA-bd_sf"/>
</dbReference>
<dbReference type="InterPro" id="IPR036390">
    <property type="entry name" value="WH_DNA-bd_sf"/>
</dbReference>
<dbReference type="InterPro" id="IPR023120">
    <property type="entry name" value="WHTH_transcript_rep_HrcA_IDD"/>
</dbReference>
<dbReference type="NCBIfam" id="TIGR00331">
    <property type="entry name" value="hrcA"/>
    <property type="match status" value="1"/>
</dbReference>
<dbReference type="PANTHER" id="PTHR34824">
    <property type="entry name" value="HEAT-INDUCIBLE TRANSCRIPTION REPRESSOR HRCA"/>
    <property type="match status" value="1"/>
</dbReference>
<dbReference type="PANTHER" id="PTHR34824:SF1">
    <property type="entry name" value="HEAT-INDUCIBLE TRANSCRIPTION REPRESSOR HRCA"/>
    <property type="match status" value="1"/>
</dbReference>
<dbReference type="Pfam" id="PF01628">
    <property type="entry name" value="HrcA"/>
    <property type="match status" value="1"/>
</dbReference>
<dbReference type="PIRSF" id="PIRSF005485">
    <property type="entry name" value="HrcA"/>
    <property type="match status" value="1"/>
</dbReference>
<dbReference type="SUPFAM" id="SSF55781">
    <property type="entry name" value="GAF domain-like"/>
    <property type="match status" value="1"/>
</dbReference>
<dbReference type="SUPFAM" id="SSF46785">
    <property type="entry name" value="Winged helix' DNA-binding domain"/>
    <property type="match status" value="1"/>
</dbReference>
<proteinExistence type="inferred from homology"/>
<organism>
    <name type="scientific">Listeria monocytogenes serovar 1/2a (strain ATCC BAA-679 / EGD-e)</name>
    <dbReference type="NCBI Taxonomy" id="169963"/>
    <lineage>
        <taxon>Bacteria</taxon>
        <taxon>Bacillati</taxon>
        <taxon>Bacillota</taxon>
        <taxon>Bacilli</taxon>
        <taxon>Bacillales</taxon>
        <taxon>Listeriaceae</taxon>
        <taxon>Listeria</taxon>
    </lineage>
</organism>
<feature type="chain" id="PRO_0000182497" description="Heat-inducible transcription repressor HrcA">
    <location>
        <begin position="1"/>
        <end position="345"/>
    </location>
</feature>
<name>HRCA_LISMO</name>
<gene>
    <name evidence="1" type="primary">hrcA</name>
    <name type="ordered locus">lmo1475</name>
</gene>
<keyword id="KW-1185">Reference proteome</keyword>
<keyword id="KW-0678">Repressor</keyword>
<keyword id="KW-0346">Stress response</keyword>
<keyword id="KW-0804">Transcription</keyword>
<keyword id="KW-0805">Transcription regulation</keyword>
<comment type="function">
    <text evidence="1">Negative regulator of class I heat shock genes (grpE-dnaK-dnaJ and groELS operons). Prevents heat-shock induction of these operons.</text>
</comment>
<comment type="similarity">
    <text evidence="1">Belongs to the HrcA family.</text>
</comment>
<accession>P0DJM4</accession>
<accession>Q9S5A6</accession>